<feature type="chain" id="PRO_1000015367" description="Large-conductance mechanosensitive channel">
    <location>
        <begin position="1"/>
        <end position="135"/>
    </location>
</feature>
<feature type="transmembrane region" description="Helical" evidence="1">
    <location>
        <begin position="10"/>
        <end position="30"/>
    </location>
</feature>
<feature type="transmembrane region" description="Helical" evidence="1">
    <location>
        <begin position="76"/>
        <end position="96"/>
    </location>
</feature>
<accession>A7ZCB7</accession>
<proteinExistence type="inferred from homology"/>
<reference key="1">
    <citation type="submission" date="2007-10" db="EMBL/GenBank/DDBJ databases">
        <title>Genome sequence of Campylobacter concisus 13826 isolated from human feces.</title>
        <authorList>
            <person name="Fouts D.E."/>
            <person name="Mongodin E.F."/>
            <person name="Puiu D."/>
            <person name="Sebastian Y."/>
            <person name="Miller W.G."/>
            <person name="Mandrell R.E."/>
            <person name="On S."/>
            <person name="Nelson K.E."/>
        </authorList>
    </citation>
    <scope>NUCLEOTIDE SEQUENCE [LARGE SCALE GENOMIC DNA]</scope>
    <source>
        <strain>13826</strain>
    </source>
</reference>
<sequence>MSFISEFKEFAMRGNVIDMAVGVVIGGAFGKIVSSLVGDIIMPVVGVVTGGVNFTDLKLTLKEAAEGAPAVTINYGSFIQTMVDFLIIAFCIFCVIKALNTLKNKLPKEEEAAPAEPEIPADIALLTEIRDLLKK</sequence>
<organism>
    <name type="scientific">Campylobacter concisus (strain 13826)</name>
    <dbReference type="NCBI Taxonomy" id="360104"/>
    <lineage>
        <taxon>Bacteria</taxon>
        <taxon>Pseudomonadati</taxon>
        <taxon>Campylobacterota</taxon>
        <taxon>Epsilonproteobacteria</taxon>
        <taxon>Campylobacterales</taxon>
        <taxon>Campylobacteraceae</taxon>
        <taxon>Campylobacter</taxon>
    </lineage>
</organism>
<protein>
    <recommendedName>
        <fullName evidence="1">Large-conductance mechanosensitive channel</fullName>
    </recommendedName>
</protein>
<dbReference type="EMBL" id="CP000792">
    <property type="protein sequence ID" value="EAT98963.1"/>
    <property type="molecule type" value="Genomic_DNA"/>
</dbReference>
<dbReference type="RefSeq" id="WP_012001400.1">
    <property type="nucleotide sequence ID" value="NC_009802.2"/>
</dbReference>
<dbReference type="SMR" id="A7ZCB7"/>
<dbReference type="STRING" id="360104.CCC13826_1549"/>
<dbReference type="KEGG" id="cco:CCC13826_1549"/>
<dbReference type="eggNOG" id="COG1970">
    <property type="taxonomic scope" value="Bacteria"/>
</dbReference>
<dbReference type="HOGENOM" id="CLU_095787_0_0_7"/>
<dbReference type="OrthoDB" id="9810350at2"/>
<dbReference type="Proteomes" id="UP000001121">
    <property type="component" value="Chromosome"/>
</dbReference>
<dbReference type="GO" id="GO:0005886">
    <property type="term" value="C:plasma membrane"/>
    <property type="evidence" value="ECO:0007669"/>
    <property type="project" value="UniProtKB-SubCell"/>
</dbReference>
<dbReference type="GO" id="GO:0008381">
    <property type="term" value="F:mechanosensitive monoatomic ion channel activity"/>
    <property type="evidence" value="ECO:0007669"/>
    <property type="project" value="UniProtKB-UniRule"/>
</dbReference>
<dbReference type="FunFam" id="1.10.1200.120:FF:000001">
    <property type="entry name" value="Large-conductance mechanosensitive channel"/>
    <property type="match status" value="1"/>
</dbReference>
<dbReference type="Gene3D" id="1.10.1200.120">
    <property type="entry name" value="Large-conductance mechanosensitive channel, MscL, domain 1"/>
    <property type="match status" value="1"/>
</dbReference>
<dbReference type="HAMAP" id="MF_00115">
    <property type="entry name" value="MscL"/>
    <property type="match status" value="1"/>
</dbReference>
<dbReference type="InterPro" id="IPR019823">
    <property type="entry name" value="Mechanosensitive_channel_CS"/>
</dbReference>
<dbReference type="InterPro" id="IPR001185">
    <property type="entry name" value="MS_channel"/>
</dbReference>
<dbReference type="InterPro" id="IPR037673">
    <property type="entry name" value="MSC/AndL"/>
</dbReference>
<dbReference type="InterPro" id="IPR036019">
    <property type="entry name" value="MscL_channel"/>
</dbReference>
<dbReference type="NCBIfam" id="TIGR00220">
    <property type="entry name" value="mscL"/>
    <property type="match status" value="1"/>
</dbReference>
<dbReference type="NCBIfam" id="NF001843">
    <property type="entry name" value="PRK00567.1-4"/>
    <property type="match status" value="1"/>
</dbReference>
<dbReference type="PANTHER" id="PTHR30266:SF2">
    <property type="entry name" value="LARGE-CONDUCTANCE MECHANOSENSITIVE CHANNEL"/>
    <property type="match status" value="1"/>
</dbReference>
<dbReference type="PANTHER" id="PTHR30266">
    <property type="entry name" value="MECHANOSENSITIVE CHANNEL MSCL"/>
    <property type="match status" value="1"/>
</dbReference>
<dbReference type="Pfam" id="PF01741">
    <property type="entry name" value="MscL"/>
    <property type="match status" value="1"/>
</dbReference>
<dbReference type="PRINTS" id="PR01264">
    <property type="entry name" value="MECHCHANNEL"/>
</dbReference>
<dbReference type="SUPFAM" id="SSF81330">
    <property type="entry name" value="Gated mechanosensitive channel"/>
    <property type="match status" value="1"/>
</dbReference>
<dbReference type="PROSITE" id="PS01327">
    <property type="entry name" value="MSCL"/>
    <property type="match status" value="1"/>
</dbReference>
<gene>
    <name evidence="1" type="primary">mscL</name>
    <name type="ordered locus">Ccon26_05280</name>
    <name type="ORF">CCC13826_1549</name>
</gene>
<evidence type="ECO:0000255" key="1">
    <source>
        <dbReference type="HAMAP-Rule" id="MF_00115"/>
    </source>
</evidence>
<name>MSCL_CAMC1</name>
<comment type="function">
    <text evidence="1">Channel that opens in response to stretch forces in the membrane lipid bilayer. May participate in the regulation of osmotic pressure changes within the cell.</text>
</comment>
<comment type="subunit">
    <text evidence="1">Homopentamer.</text>
</comment>
<comment type="subcellular location">
    <subcellularLocation>
        <location evidence="1">Cell inner membrane</location>
        <topology evidence="1">Multi-pass membrane protein</topology>
    </subcellularLocation>
</comment>
<comment type="similarity">
    <text evidence="1">Belongs to the MscL family.</text>
</comment>
<keyword id="KW-0997">Cell inner membrane</keyword>
<keyword id="KW-1003">Cell membrane</keyword>
<keyword id="KW-0407">Ion channel</keyword>
<keyword id="KW-0406">Ion transport</keyword>
<keyword id="KW-0472">Membrane</keyword>
<keyword id="KW-0812">Transmembrane</keyword>
<keyword id="KW-1133">Transmembrane helix</keyword>
<keyword id="KW-0813">Transport</keyword>